<comment type="function">
    <text evidence="4 7 8 9 10 11 12 13">Selects the target DNA sites for transposition. Recruits DDE-recombinase A to the target sites and catalytically activates it. Displays non-specific DNA-binding properties. Polymerizes as helical filaments around the DNA. Coating of the DNA by the target DNA activator B might play a role in favoring target-primed replication over integration. Prevents self-integration into an integrated copy of the viral genome. This mechanism is called target immunity and is achieved by two mechanisms: first, the target DNA activator B dissociates from the viral genome ends upon interaction in cis with DDE-recombinase A, which makes the viral genome ends a poor target for new insertions. Second, the interior of the viral genome may also be protected from integration events by the target DNA activator B being strongly bound throughout the whole viral genome.</text>
</comment>
<comment type="catalytic activity">
    <reaction evidence="12">
        <text>ATP + H2O = ADP + phosphate + H(+)</text>
        <dbReference type="Rhea" id="RHEA:13065"/>
        <dbReference type="ChEBI" id="CHEBI:15377"/>
        <dbReference type="ChEBI" id="CHEBI:15378"/>
        <dbReference type="ChEBI" id="CHEBI:30616"/>
        <dbReference type="ChEBI" id="CHEBI:43474"/>
        <dbReference type="ChEBI" id="CHEBI:456216"/>
    </reaction>
</comment>
<comment type="cofactor">
    <cofactor evidence="12">
        <name>Mg(2+)</name>
        <dbReference type="ChEBI" id="CHEBI:18420"/>
    </cofactor>
</comment>
<comment type="subunit">
    <text evidence="5 6 10 12 16">Homomultimer. Polymerizes in presence of ATP, preferentially on DNA. ATP hydrolysis triggers polymers dissassembly. Interacts with DDE-recombinase A; this interaction stimulates the catalytic activity of the latter as well as the ATPase activity of MuB followed by its dissociation from DNA.</text>
</comment>
<comment type="subcellular location">
    <subcellularLocation>
        <location evidence="17">Host cytoplasm</location>
    </subcellularLocation>
</comment>
<comment type="induction">
    <text evidence="14">Expressed in the early phase of the viral replicative cycle. Expression of early genes is repressed by viral Repc (latency) and favored by viral Ner protein.</text>
</comment>
<comment type="domain">
    <text evidence="3 15">The N-terminus region contains a putative DNA-binding region that allows filament-filament interactions and probably favors MuB polymerization and filament clustering (PubMed:26169224). The central region contains the ATPase module (PubMed:26169224). The C-terminus comprises four helices arranged in a loosely packed bundle which can bind to dsDNA (PubMed:11060014).</text>
</comment>
<comment type="similarity">
    <text evidence="17">Belongs to the AAA ATPase family.</text>
</comment>
<protein>
    <recommendedName>
        <fullName>ATP-dependent target DNA activator B</fullName>
        <ecNumber evidence="12">3.6.1.-</ecNumber>
    </recommendedName>
    <alternativeName>
        <fullName>Gene product 04</fullName>
        <shortName>gp04</shortName>
    </alternativeName>
    <alternativeName>
        <fullName>Gene product B</fullName>
        <shortName>gpB</shortName>
    </alternativeName>
    <alternativeName>
        <fullName>MuB</fullName>
    </alternativeName>
</protein>
<sequence length="312" mass="35106">MNISDIRAGLRTLVENEETTFKQIALESGLSTGTISSFINDKYNGDNERVSQMLQRWLEKYHAVAELPEPPRFVETQTVKQIWTSMRFASLTESIAVVCGNPGVGKTEAAREYRRTNNNVWMITITPSCASVLECLTELAFELGMNDAPRRKGPLSRALRRRLEGTQGLVIIDEADHLGAEVLEELRLLQESTRIGLVLMGNHRVYSNMTGGNRTVEFARLFSRIAKRTAINKTKKADVKAIADAWQINGEKELELLQQIAQKPGALRILNHSLRLAAMTAHGKGERVNEDYLRQAFRELDLDVDISTLLRN</sequence>
<organism>
    <name type="scientific">Escherichia phage Mu</name>
    <name type="common">Bacteriophage Mu</name>
    <dbReference type="NCBI Taxonomy" id="2681603"/>
    <lineage>
        <taxon>Viruses</taxon>
        <taxon>Duplodnaviria</taxon>
        <taxon>Heunggongvirae</taxon>
        <taxon>Uroviricota</taxon>
        <taxon>Caudoviricetes</taxon>
        <taxon>Muvirus</taxon>
        <taxon>Muvirus mu</taxon>
    </lineage>
</organism>
<evidence type="ECO:0000250" key="1"/>
<evidence type="ECO:0000255" key="2"/>
<evidence type="ECO:0000269" key="3">
    <source>
    </source>
</evidence>
<evidence type="ECO:0000269" key="4">
    <source>
    </source>
</evidence>
<evidence type="ECO:0000269" key="5">
    <source>
    </source>
</evidence>
<evidence type="ECO:0000269" key="6">
    <source>
    </source>
</evidence>
<evidence type="ECO:0000269" key="7">
    <source>
    </source>
</evidence>
<evidence type="ECO:0000269" key="8">
    <source>
    </source>
</evidence>
<evidence type="ECO:0000269" key="9">
    <source>
    </source>
</evidence>
<evidence type="ECO:0000269" key="10">
    <source>
    </source>
</evidence>
<evidence type="ECO:0000269" key="11">
    <source>
    </source>
</evidence>
<evidence type="ECO:0000269" key="12">
    <source>
    </source>
</evidence>
<evidence type="ECO:0000269" key="13">
    <source>
    </source>
</evidence>
<evidence type="ECO:0000269" key="14">
    <source>
    </source>
</evidence>
<evidence type="ECO:0000269" key="15">
    <source>
    </source>
</evidence>
<evidence type="ECO:0000269" key="16">
    <source>
    </source>
</evidence>
<evidence type="ECO:0000305" key="17"/>
<evidence type="ECO:0007744" key="18">
    <source>
        <dbReference type="PDB" id="2MQK"/>
    </source>
</evidence>
<evidence type="ECO:0007829" key="19">
    <source>
        <dbReference type="PDB" id="2MQK"/>
    </source>
</evidence>
<evidence type="ECO:0007829" key="20">
    <source>
        <dbReference type="PDB" id="8XVB"/>
    </source>
</evidence>
<accession>P03763</accession>
<keyword id="KW-0002">3D-structure</keyword>
<keyword id="KW-0067">ATP-binding</keyword>
<keyword id="KW-0229">DNA integration</keyword>
<keyword id="KW-0235">DNA replication</keyword>
<keyword id="KW-0238">DNA-binding</keyword>
<keyword id="KW-0244">Early protein</keyword>
<keyword id="KW-1035">Host cytoplasm</keyword>
<keyword id="KW-0378">Hydrolase</keyword>
<keyword id="KW-0460">Magnesium</keyword>
<keyword id="KW-0479">Metal-binding</keyword>
<keyword id="KW-0547">Nucleotide-binding</keyword>
<keyword id="KW-1185">Reference proteome</keyword>
<keyword id="KW-0815">Transposition</keyword>
<keyword id="KW-1194">Viral DNA replication</keyword>
<organismHost>
    <name type="scientific">Enterobacteriaceae</name>
    <dbReference type="NCBI Taxonomy" id="543"/>
</organismHost>
<name>TARGB_BPMU</name>
<feature type="chain" id="PRO_0000077679" description="ATP-dependent target DNA activator B">
    <location>
        <begin position="1"/>
        <end position="312"/>
    </location>
</feature>
<feature type="DNA-binding region" description="H-T-H motif" evidence="2">
    <location>
        <begin position="21"/>
        <end position="40"/>
    </location>
</feature>
<feature type="DNA-binding region">
    <location>
        <begin position="223"/>
        <end position="312"/>
    </location>
</feature>
<feature type="binding site" evidence="1">
    <location>
        <begin position="100"/>
        <end position="107"/>
    </location>
    <ligand>
        <name>ATP</name>
        <dbReference type="ChEBI" id="CHEBI:30616"/>
    </ligand>
</feature>
<feature type="site" description="Involved in DNA binding" evidence="12">
    <location>
        <position position="151"/>
    </location>
</feature>
<feature type="site" description="Involved in DNA binding" evidence="12">
    <location>
        <position position="152"/>
    </location>
</feature>
<feature type="site" description="Sensor-1; involved in ATP-binding and hydrolysis" evidence="12">
    <location>
        <position position="202"/>
    </location>
</feature>
<feature type="site" description="R-finger; involved in ATP-binding" evidence="12">
    <location>
        <position position="224"/>
    </location>
</feature>
<feature type="site" description="Sensor-2; involved in ATP-binding and hydrolysis" evidence="12">
    <location>
        <position position="268"/>
    </location>
</feature>
<feature type="mutagenesis site" description="Complete loss of strand transfer stimulation activity." evidence="12">
    <original>RRK</original>
    <variation>AGA</variation>
    <location>
        <begin position="150"/>
        <end position="152"/>
    </location>
</feature>
<feature type="mutagenesis site" description="Complete loss of strand transfer stimulation activity and self-integration protection." evidence="12">
    <original>K</original>
    <variation>A</variation>
    <location>
        <position position="152"/>
    </location>
</feature>
<feature type="mutagenesis site" description="20 fold decrease in ATPase activity due to impaired ATP hydrolysis." evidence="12">
    <original>R</original>
    <variation>A</variation>
    <location>
        <position position="187"/>
    </location>
</feature>
<feature type="mutagenesis site" description="60 fold decrease in ATPase activity due to impaired ATP hydrolysis. No effect on ATP-binding and polymerization." evidence="12">
    <original>N</original>
    <variation>A</variation>
    <location>
        <position position="202"/>
    </location>
</feature>
<feature type="mutagenesis site" description="12 fold decrease in ATPase activity due to impaired ATP-binding." evidence="12">
    <original>R</original>
    <variation>A</variation>
    <location>
        <position position="220"/>
    </location>
</feature>
<feature type="mutagenesis site" description="60 fold decrease in ATPase activity due to impaired ATP-binding. No polymerization." evidence="12">
    <original>R</original>
    <variation>A</variation>
    <location>
        <position position="224"/>
    </location>
</feature>
<feature type="mutagenesis site" description="Complete loss of MuA regulation of ATPase activity. Complete loss of strand transfer stimulation activity." evidence="12">
    <original>KTKK</original>
    <variation>ATAA</variation>
    <location>
        <begin position="233"/>
        <end position="236"/>
    </location>
</feature>
<feature type="mutagenesis site" description="Almost complete loss of ATPase activity due to impaired ATP-binding. No polymerization." evidence="12">
    <original>R</original>
    <variation>A</variation>
    <location>
        <position position="268"/>
    </location>
</feature>
<feature type="sequence conflict" description="In Ref. 4; no nucleotide entry." evidence="17" ref="4">
    <original>A</original>
    <variation>V</variation>
    <location>
        <position position="281"/>
    </location>
</feature>
<feature type="helix" evidence="19">
    <location>
        <begin position="3"/>
        <end position="15"/>
    </location>
</feature>
<feature type="helix" evidence="19">
    <location>
        <begin position="21"/>
        <end position="28"/>
    </location>
</feature>
<feature type="helix" evidence="19">
    <location>
        <begin position="32"/>
        <end position="39"/>
    </location>
</feature>
<feature type="helix" evidence="19">
    <location>
        <begin position="47"/>
        <end position="62"/>
    </location>
</feature>
<feature type="helix" evidence="20">
    <location>
        <begin position="77"/>
        <end position="92"/>
    </location>
</feature>
<feature type="strand" evidence="20">
    <location>
        <begin position="96"/>
        <end position="100"/>
    </location>
</feature>
<feature type="strand" evidence="20">
    <location>
        <begin position="102"/>
        <end position="105"/>
    </location>
</feature>
<feature type="helix" evidence="20">
    <location>
        <begin position="106"/>
        <end position="116"/>
    </location>
</feature>
<feature type="strand" evidence="20">
    <location>
        <begin position="117"/>
        <end position="124"/>
    </location>
</feature>
<feature type="helix" evidence="20">
    <location>
        <begin position="127"/>
        <end position="129"/>
    </location>
</feature>
<feature type="helix" evidence="20">
    <location>
        <begin position="132"/>
        <end position="143"/>
    </location>
</feature>
<feature type="helix" evidence="20">
    <location>
        <begin position="152"/>
        <end position="163"/>
    </location>
</feature>
<feature type="strand" evidence="20">
    <location>
        <begin position="169"/>
        <end position="173"/>
    </location>
</feature>
<feature type="helix" evidence="20">
    <location>
        <begin position="175"/>
        <end position="177"/>
    </location>
</feature>
<feature type="helix" evidence="20">
    <location>
        <begin position="180"/>
        <end position="193"/>
    </location>
</feature>
<feature type="strand" evidence="20">
    <location>
        <begin position="196"/>
        <end position="202"/>
    </location>
</feature>
<feature type="helix" evidence="20">
    <location>
        <begin position="204"/>
        <end position="207"/>
    </location>
</feature>
<feature type="helix" evidence="20">
    <location>
        <begin position="214"/>
        <end position="217"/>
    </location>
</feature>
<feature type="helix" evidence="20">
    <location>
        <begin position="219"/>
        <end position="224"/>
    </location>
</feature>
<feature type="strand" evidence="20">
    <location>
        <begin position="228"/>
        <end position="231"/>
    </location>
</feature>
<feature type="helix" evidence="20">
    <location>
        <begin position="236"/>
        <end position="245"/>
    </location>
</feature>
<feature type="helix" evidence="20">
    <location>
        <begin position="251"/>
        <end position="261"/>
    </location>
</feature>
<feature type="strand" evidence="20">
    <location>
        <begin position="263"/>
        <end position="265"/>
    </location>
</feature>
<feature type="helix" evidence="20">
    <location>
        <begin position="266"/>
        <end position="284"/>
    </location>
</feature>
<feature type="helix" evidence="20">
    <location>
        <begin position="290"/>
        <end position="298"/>
    </location>
</feature>
<feature type="turn" evidence="20">
    <location>
        <begin position="300"/>
        <end position="303"/>
    </location>
</feature>
<feature type="helix" evidence="20">
    <location>
        <begin position="306"/>
        <end position="309"/>
    </location>
</feature>
<gene>
    <name type="primary">B</name>
    <name type="ordered locus">Mup04</name>
</gene>
<proteinExistence type="evidence at protein level"/>
<reference key="1">
    <citation type="journal article" date="1984" name="Nucleic Acids Res.">
        <title>The nucleotide sequence of the B gene of bacteriophage Mu.</title>
        <authorList>
            <person name="Miller J.L."/>
            <person name="Anderson S.K."/>
            <person name="Fujita D.J."/>
            <person name="Chaconas G."/>
            <person name="Baldwin D.L."/>
            <person name="Harshey R.M."/>
        </authorList>
    </citation>
    <scope>NUCLEOTIDE SEQUENCE [GENOMIC DNA]</scope>
</reference>
<reference key="2">
    <citation type="book" date="1987" name="Phage Mu">
        <title>Sequence of the left end of Mu.</title>
        <editorList>
            <person name="Symonds N."/>
            <person name="Toussaint A."/>
            <person name="van de Putte P."/>
            <person name="Howe M.M."/>
        </editorList>
        <authorList>
            <person name="Priess H."/>
            <person name="Brauer B."/>
            <person name="Schmidt C."/>
            <person name="Kamp D."/>
        </authorList>
    </citation>
    <scope>NUCLEOTIDE SEQUENCE [GENOMIC DNA]</scope>
</reference>
<reference key="3">
    <citation type="journal article" date="2002" name="J. Mol. Biol.">
        <title>Bacteriophage Mu genome sequence: analysis and comparison with Mu-like prophages in Haemophilus, Neisseria and Deinococcus.</title>
        <authorList>
            <person name="Morgan G.J."/>
            <person name="Hatfull G.F."/>
            <person name="Casjens S."/>
            <person name="Hendrix R.W."/>
        </authorList>
    </citation>
    <scope>NUCLEOTIDE SEQUENCE [LARGE SCALE GENOMIC DNA]</scope>
</reference>
<reference key="4">
    <citation type="journal article" date="1981" name="Gene">
        <title>The nucleotide sequence and protein-coding capability of the transposable element IS5.</title>
        <authorList>
            <person name="Engler J.A."/>
            <person name="van Bree M.P."/>
        </authorList>
    </citation>
    <scope>NUCLEOTIDE SEQUENCE [GENOMIC DNA] OF 277-312</scope>
</reference>
<reference key="5">
    <citation type="journal article" date="1989" name="J. Bacteriol.">
        <title>Localization and regulation of bacteriophage Mu promoters.</title>
        <authorList>
            <person name="Stoddard S.F."/>
            <person name="Howe M.M."/>
        </authorList>
    </citation>
    <scope>INDUCTION</scope>
</reference>
<reference key="6">
    <citation type="journal article" date="1991" name="Cell">
        <title>MuB protein allosterically activates strand transfer by the transposase of phage Mu.</title>
        <authorList>
            <person name="Baker T.A."/>
            <person name="Mizuuchi M."/>
            <person name="Mizuuchi K."/>
        </authorList>
    </citation>
    <scope>FUNCTION</scope>
</reference>
<reference key="7">
    <citation type="journal article" date="1997" name="Genes Dev.">
        <title>ClpX and MuB interact with overlapping regions of Mu transposase: implications for control of the transposition pathway.</title>
        <authorList>
            <person name="Levchenko I."/>
            <person name="Yamauchi M."/>
            <person name="Baker T.A."/>
        </authorList>
    </citation>
    <scope>INTERACTION WITH DDE-RECOMBINASE A</scope>
</reference>
<reference key="8">
    <citation type="journal article" date="2001" name="Mol. Microbiol.">
        <title>Differential role of the Mu B protein in phage Mu integration vs. replication: mechanistic insights into two transposition pathways.</title>
        <authorList>
            <person name="Roldan L.A."/>
            <person name="Baker T.A."/>
        </authorList>
    </citation>
    <scope>FUNCTION</scope>
</reference>
<reference key="9">
    <citation type="journal article" date="2002" name="Mol. Cell">
        <title>Direct observation of single MuB polymers: evidence for a DNA-dependent conformational change for generating an active target complex.</title>
        <authorList>
            <person name="Greene E.C."/>
            <person name="Mizuuchi K."/>
        </authorList>
    </citation>
    <scope>SUBUNIT</scope>
</reference>
<reference key="10">
    <citation type="journal article" date="2003" name="Biochemistry">
        <title>MuA transposase separates DNA sequence recognition from catalysis.</title>
        <authorList>
            <person name="Goldhaber-Gordon I."/>
            <person name="Early M.H."/>
            <person name="Baker T.A."/>
        </authorList>
    </citation>
    <scope>FUNCTION</scope>
</reference>
<reference key="11">
    <citation type="journal article" date="2003" name="J. Biol. Chem.">
        <title>Effect of mutations in the C-terminal domain of Mu B on DNA binding and interactions with Mu A transposase.</title>
        <authorList>
            <person name="Coros C.J."/>
            <person name="Sekino Y."/>
            <person name="Baker T.A."/>
            <person name="Chaconas G."/>
        </authorList>
    </citation>
    <scope>INTERACTION WITH DDE-RECOMBINASE A</scope>
    <scope>DNA-BINDING</scope>
</reference>
<reference key="12">
    <citation type="journal article" date="2007" name="Proc. Natl. Acad. Sci. U.S.A.">
        <title>DNA transposition target immunity and the determinants of the MuB distribution patterns on DNA.</title>
        <authorList>
            <person name="Tan X."/>
            <person name="Mizuuchi M."/>
            <person name="Mizuuchi K."/>
        </authorList>
    </citation>
    <scope>FUNCTION</scope>
</reference>
<reference key="13">
    <citation type="journal article" date="2007" name="J. Mol. Biol.">
        <title>The dynamic Mu transpososome: MuB activation prevents disintegration.</title>
        <authorList>
            <person name="Lemberg K.M."/>
            <person name="Schweidenback C.T."/>
            <person name="Baker T.A."/>
        </authorList>
    </citation>
    <scope>FUNCTION</scope>
    <scope>SUBUNIT</scope>
</reference>
<reference key="14">
    <citation type="journal article" date="2010" name="Mob. DNA">
        <title>Immunity of replicating Mu to self-integration: a novel mechanism employing MuB protein.</title>
        <authorList>
            <person name="Ge J."/>
            <person name="Lou Z."/>
            <person name="Harshey R.M."/>
        </authorList>
    </citation>
    <scope>FUNCTION</scope>
</reference>
<reference key="15">
    <citation type="journal article" date="2013" name="Mob. Genet. Elements">
        <title>MuB gives a new twist to target DNA selection.</title>
        <authorList>
            <person name="Dramicanin M."/>
            <person name="Ramon-Maiques S."/>
        </authorList>
    </citation>
    <scope>FUNCTION</scope>
</reference>
<reference key="16">
    <citation type="journal article" date="2013" name="Proc. Natl. Acad. Sci. U.S.A.">
        <title>MuB is an AAA+ ATPase that forms helical filaments to control target selection for DNA transposition.</title>
        <authorList>
            <person name="Mizuno N."/>
            <person name="Dramicanin M."/>
            <person name="Mizuuchi M."/>
            <person name="Adam J."/>
            <person name="Wang Y."/>
            <person name="Han Y.W."/>
            <person name="Yang W."/>
            <person name="Steven A.C."/>
            <person name="Mizuuchi K."/>
            <person name="Ramon-Maiques S."/>
        </authorList>
    </citation>
    <scope>FUNCTION</scope>
    <scope>SUBUNIT</scope>
    <scope>COFACTOR</scope>
    <scope>MUTAGENESIS OF 150-ARG--ARG-152; ARG-187; ASN-202; ARG-220; ARG-224; 233-LYS--LYS-236 AND ARG-268</scope>
    <scope>CATALYTIC ACTIVITY</scope>
</reference>
<reference key="17">
    <citation type="journal article" date="2000" name="EMBO J.">
        <title>The solution structure of the C-terminal domain of the Mu B transposition protein.</title>
        <authorList>
            <person name="Hung L.H."/>
            <person name="Chaconas G."/>
            <person name="Shaw G.S."/>
        </authorList>
    </citation>
    <scope>STRUCTURE BY NMR OF 223-312</scope>
    <scope>DNA-BINDING</scope>
    <scope>DOMAIN</scope>
</reference>
<reference evidence="18" key="18">
    <citation type="journal article" date="2015" name="J. Struct. Biol.">
        <title>The N-terminal domain of MuB protein has striking structural similarity to DNA-binding domains and mediates MuB filament-filament interactions.</title>
        <authorList>
            <person name="Dramicanin M."/>
            <person name="Lopez-Mendez B."/>
            <person name="Boskovic J."/>
            <person name="Campos-Olivas R."/>
            <person name="Ramon-Maiques S."/>
        </authorList>
    </citation>
    <scope>STRUCTURE BY NMR OF 1-63</scope>
    <scope>DOMAIN</scope>
</reference>
<dbReference type="EC" id="3.6.1.-" evidence="12"/>
<dbReference type="EMBL" id="X01149">
    <property type="protein sequence ID" value="CAA25599.1"/>
    <property type="molecule type" value="Genomic_DNA"/>
</dbReference>
<dbReference type="EMBL" id="M64097">
    <property type="protein sequence ID" value="AAA32382.1"/>
    <property type="molecule type" value="Genomic_DNA"/>
</dbReference>
<dbReference type="EMBL" id="AF083977">
    <property type="protein sequence ID" value="AAF01100.1"/>
    <property type="molecule type" value="Genomic_DNA"/>
</dbReference>
<dbReference type="EMBL" id="M11195">
    <property type="protein sequence ID" value="AAA32370.1"/>
    <property type="molecule type" value="Genomic_DNA"/>
</dbReference>
<dbReference type="PIR" id="A04388">
    <property type="entry name" value="ZBBPU2"/>
</dbReference>
<dbReference type="RefSeq" id="NP_050608.1">
    <property type="nucleotide sequence ID" value="NC_000929.1"/>
</dbReference>
<dbReference type="PDB" id="1F6V">
    <property type="method" value="NMR"/>
    <property type="chains" value="A=223-312"/>
</dbReference>
<dbReference type="PDB" id="2MQK">
    <property type="method" value="NMR"/>
    <property type="chains" value="A=1-63"/>
</dbReference>
<dbReference type="PDB" id="8XVB">
    <property type="method" value="EM"/>
    <property type="resolution" value="3.40 A"/>
    <property type="chains" value="A/B/C/D/E/F/G/H=1-312"/>
</dbReference>
<dbReference type="PDB" id="8XVC">
    <property type="method" value="EM"/>
    <property type="resolution" value="4.32 A"/>
    <property type="chains" value="A/B/C/D/E/F/G/H/I/J/K/L/M/N/O/P/Q/R=1-312"/>
</dbReference>
<dbReference type="PDB" id="8XVD">
    <property type="method" value="EM"/>
    <property type="resolution" value="4.43 A"/>
    <property type="chains" value="A/B/C/D/E/F/G/H/I/J/K/L/M/N/O/P/Q/R/S/T=1-312"/>
</dbReference>
<dbReference type="PDBsum" id="1F6V"/>
<dbReference type="PDBsum" id="2MQK"/>
<dbReference type="PDBsum" id="8XVB"/>
<dbReference type="PDBsum" id="8XVC"/>
<dbReference type="PDBsum" id="8XVD"/>
<dbReference type="BMRB" id="P03763"/>
<dbReference type="EMDB" id="EMD-38695"/>
<dbReference type="EMDB" id="EMD-38696"/>
<dbReference type="EMDB" id="EMD-38697"/>
<dbReference type="SMR" id="P03763"/>
<dbReference type="GeneID" id="2636257"/>
<dbReference type="KEGG" id="vg:2636257"/>
<dbReference type="EvolutionaryTrace" id="P03763"/>
<dbReference type="Proteomes" id="UP000002611">
    <property type="component" value="Genome"/>
</dbReference>
<dbReference type="Proteomes" id="UP000401936">
    <property type="component" value="Segment"/>
</dbReference>
<dbReference type="GO" id="GO:0030430">
    <property type="term" value="C:host cell cytoplasm"/>
    <property type="evidence" value="ECO:0007669"/>
    <property type="project" value="UniProtKB-SubCell"/>
</dbReference>
<dbReference type="GO" id="GO:0005524">
    <property type="term" value="F:ATP binding"/>
    <property type="evidence" value="ECO:0007669"/>
    <property type="project" value="UniProtKB-KW"/>
</dbReference>
<dbReference type="GO" id="GO:0016887">
    <property type="term" value="F:ATP hydrolysis activity"/>
    <property type="evidence" value="ECO:0000315"/>
    <property type="project" value="UniProtKB"/>
</dbReference>
<dbReference type="GO" id="GO:0003677">
    <property type="term" value="F:DNA binding"/>
    <property type="evidence" value="ECO:0007669"/>
    <property type="project" value="UniProtKB-KW"/>
</dbReference>
<dbReference type="GO" id="GO:0046872">
    <property type="term" value="F:metal ion binding"/>
    <property type="evidence" value="ECO:0007669"/>
    <property type="project" value="UniProtKB-KW"/>
</dbReference>
<dbReference type="GO" id="GO:0015074">
    <property type="term" value="P:DNA integration"/>
    <property type="evidence" value="ECO:0007669"/>
    <property type="project" value="UniProtKB-KW"/>
</dbReference>
<dbReference type="GO" id="GO:0006260">
    <property type="term" value="P:DNA replication"/>
    <property type="evidence" value="ECO:0007669"/>
    <property type="project" value="UniProtKB-KW"/>
</dbReference>
<dbReference type="GO" id="GO:0006313">
    <property type="term" value="P:DNA transposition"/>
    <property type="evidence" value="ECO:0007669"/>
    <property type="project" value="InterPro"/>
</dbReference>
<dbReference type="GO" id="GO:0039693">
    <property type="term" value="P:viral DNA genome replication"/>
    <property type="evidence" value="ECO:0007669"/>
    <property type="project" value="UniProtKB-KW"/>
</dbReference>
<dbReference type="CDD" id="cd01670">
    <property type="entry name" value="Death"/>
    <property type="match status" value="1"/>
</dbReference>
<dbReference type="FunFam" id="1.10.1180.10:FF:000001">
    <property type="entry name" value="DNA transposition protein (GpB)"/>
    <property type="match status" value="1"/>
</dbReference>
<dbReference type="FunFam" id="3.40.50.300:FF:002149">
    <property type="entry name" value="DNA transposition protein (GpB)"/>
    <property type="match status" value="1"/>
</dbReference>
<dbReference type="Gene3D" id="1.10.1180.10">
    <property type="entry name" value="B transposition protein, C-terminal domain"/>
    <property type="match status" value="1"/>
</dbReference>
<dbReference type="Gene3D" id="1.10.260.40">
    <property type="entry name" value="lambda repressor-like DNA-binding domains"/>
    <property type="match status" value="1"/>
</dbReference>
<dbReference type="Gene3D" id="3.40.50.300">
    <property type="entry name" value="P-loop containing nucleotide triphosphate hydrolases"/>
    <property type="match status" value="1"/>
</dbReference>
<dbReference type="InterPro" id="IPR049945">
    <property type="entry name" value="AAA_22"/>
</dbReference>
<dbReference type="InterPro" id="IPR036733">
    <property type="entry name" value="B_transposit_C_sf"/>
</dbReference>
<dbReference type="InterPro" id="IPR009084">
    <property type="entry name" value="B_transpositn_C"/>
</dbReference>
<dbReference type="InterPro" id="IPR052026">
    <property type="entry name" value="ExeA_AAA_ATPase_DNA-bind"/>
</dbReference>
<dbReference type="InterPro" id="IPR010982">
    <property type="entry name" value="Lambda_DNA-bd_dom_sf"/>
</dbReference>
<dbReference type="InterPro" id="IPR027417">
    <property type="entry name" value="P-loop_NTPase"/>
</dbReference>
<dbReference type="PANTHER" id="PTHR35894">
    <property type="entry name" value="GENERAL SECRETION PATHWAY PROTEIN A-RELATED"/>
    <property type="match status" value="1"/>
</dbReference>
<dbReference type="PANTHER" id="PTHR35894:SF5">
    <property type="entry name" value="MU-LIKE PROPHAGE FLUMU DNA TRANSPOSITION PROTEIN B"/>
    <property type="match status" value="1"/>
</dbReference>
<dbReference type="Pfam" id="PF13401">
    <property type="entry name" value="AAA_22"/>
    <property type="match status" value="1"/>
</dbReference>
<dbReference type="Pfam" id="PF09077">
    <property type="entry name" value="Phage-MuB_C"/>
    <property type="match status" value="1"/>
</dbReference>
<dbReference type="SUPFAM" id="SSF47681">
    <property type="entry name" value="C-terminal domain of B transposition protein"/>
    <property type="match status" value="1"/>
</dbReference>
<dbReference type="SUPFAM" id="SSF52540">
    <property type="entry name" value="P-loop containing nucleoside triphosphate hydrolases"/>
    <property type="match status" value="1"/>
</dbReference>